<gene>
    <name type="ordered locus">ACIAD2218</name>
</gene>
<proteinExistence type="inferred from homology"/>
<feature type="chain" id="PRO_0000261994" description="UPF0246 protein ACIAD2218">
    <location>
        <begin position="1"/>
        <end position="258"/>
    </location>
</feature>
<protein>
    <recommendedName>
        <fullName evidence="1">UPF0246 protein ACIAD2218</fullName>
    </recommendedName>
</protein>
<dbReference type="EMBL" id="CR543861">
    <property type="protein sequence ID" value="CAG69014.1"/>
    <property type="status" value="ALT_INIT"/>
    <property type="molecule type" value="Genomic_DNA"/>
</dbReference>
<dbReference type="SMR" id="Q6FA99"/>
<dbReference type="STRING" id="202950.GCA_001485005_00175"/>
<dbReference type="GeneID" id="45234550"/>
<dbReference type="KEGG" id="aci:ACIAD2218"/>
<dbReference type="eggNOG" id="COG3022">
    <property type="taxonomic scope" value="Bacteria"/>
</dbReference>
<dbReference type="HOGENOM" id="CLU_061989_0_0_6"/>
<dbReference type="OrthoDB" id="9777133at2"/>
<dbReference type="BioCyc" id="ASP62977:ACIAD_RS10160-MONOMER"/>
<dbReference type="Proteomes" id="UP000000430">
    <property type="component" value="Chromosome"/>
</dbReference>
<dbReference type="GO" id="GO:0005829">
    <property type="term" value="C:cytosol"/>
    <property type="evidence" value="ECO:0007669"/>
    <property type="project" value="TreeGrafter"/>
</dbReference>
<dbReference type="GO" id="GO:0033194">
    <property type="term" value="P:response to hydroperoxide"/>
    <property type="evidence" value="ECO:0007669"/>
    <property type="project" value="TreeGrafter"/>
</dbReference>
<dbReference type="HAMAP" id="MF_00652">
    <property type="entry name" value="UPF0246"/>
    <property type="match status" value="1"/>
</dbReference>
<dbReference type="InterPro" id="IPR005583">
    <property type="entry name" value="YaaA"/>
</dbReference>
<dbReference type="NCBIfam" id="NF002541">
    <property type="entry name" value="PRK02101.1-1"/>
    <property type="match status" value="1"/>
</dbReference>
<dbReference type="NCBIfam" id="NF002542">
    <property type="entry name" value="PRK02101.1-3"/>
    <property type="match status" value="1"/>
</dbReference>
<dbReference type="PANTHER" id="PTHR30283:SF4">
    <property type="entry name" value="PEROXIDE STRESS RESISTANCE PROTEIN YAAA"/>
    <property type="match status" value="1"/>
</dbReference>
<dbReference type="PANTHER" id="PTHR30283">
    <property type="entry name" value="PEROXIDE STRESS RESPONSE PROTEIN YAAA"/>
    <property type="match status" value="1"/>
</dbReference>
<dbReference type="Pfam" id="PF03883">
    <property type="entry name" value="H2O2_YaaD"/>
    <property type="match status" value="1"/>
</dbReference>
<sequence>MLALISPAKTLDYESTLPTDKHTLPRLLDQSQALIDYCRSLSASEIASLMSVSEKIAKLNAERFQDWTSELTLANARQAIFAFKGDVYTGLDAYHLQENDFEFAQKHLRMLSGLYGLLRPLDLMMPYRLEMGTKLHNSRGHNLYEFWDDRITRLINEDLEQTNSKILVNIASDEYYKSVKEQKINAQIVKPVFLDQKNGKYKVISFYAKKARGLMARFIIENKLENAEDLKAFNSEGYYFDLENSNQHELVFKRDEQA</sequence>
<reference key="1">
    <citation type="journal article" date="2004" name="Nucleic Acids Res.">
        <title>Unique features revealed by the genome sequence of Acinetobacter sp. ADP1, a versatile and naturally transformation competent bacterium.</title>
        <authorList>
            <person name="Barbe V."/>
            <person name="Vallenet D."/>
            <person name="Fonknechten N."/>
            <person name="Kreimeyer A."/>
            <person name="Oztas S."/>
            <person name="Labarre L."/>
            <person name="Cruveiller S."/>
            <person name="Robert C."/>
            <person name="Duprat S."/>
            <person name="Wincker P."/>
            <person name="Ornston L.N."/>
            <person name="Weissenbach J."/>
            <person name="Marliere P."/>
            <person name="Cohen G.N."/>
            <person name="Medigue C."/>
        </authorList>
    </citation>
    <scope>NUCLEOTIDE SEQUENCE [LARGE SCALE GENOMIC DNA]</scope>
    <source>
        <strain>ATCC 33305 / BD413 / ADP1</strain>
    </source>
</reference>
<name>Y2218_ACIAD</name>
<evidence type="ECO:0000255" key="1">
    <source>
        <dbReference type="HAMAP-Rule" id="MF_00652"/>
    </source>
</evidence>
<evidence type="ECO:0000305" key="2"/>
<comment type="similarity">
    <text evidence="1">Belongs to the UPF0246 family.</text>
</comment>
<comment type="sequence caution" evidence="2">
    <conflict type="erroneous initiation">
        <sequence resource="EMBL-CDS" id="CAG69014"/>
    </conflict>
</comment>
<accession>Q6FA99</accession>
<organism>
    <name type="scientific">Acinetobacter baylyi (strain ATCC 33305 / BD413 / ADP1)</name>
    <dbReference type="NCBI Taxonomy" id="62977"/>
    <lineage>
        <taxon>Bacteria</taxon>
        <taxon>Pseudomonadati</taxon>
        <taxon>Pseudomonadota</taxon>
        <taxon>Gammaproteobacteria</taxon>
        <taxon>Moraxellales</taxon>
        <taxon>Moraxellaceae</taxon>
        <taxon>Acinetobacter</taxon>
    </lineage>
</organism>